<proteinExistence type="inferred from homology"/>
<comment type="function">
    <text evidence="1">Catalyzes the attachment of alanine to tRNA(Ala) in a two-step reaction: alanine is first activated by ATP to form Ala-AMP and then transferred to the acceptor end of tRNA(Ala). Also edits incorrectly charged Ser-tRNA(Ala) and Gly-tRNA(Ala) via its editing domain.</text>
</comment>
<comment type="catalytic activity">
    <reaction evidence="1">
        <text>tRNA(Ala) + L-alanine + ATP = L-alanyl-tRNA(Ala) + AMP + diphosphate</text>
        <dbReference type="Rhea" id="RHEA:12540"/>
        <dbReference type="Rhea" id="RHEA-COMP:9657"/>
        <dbReference type="Rhea" id="RHEA-COMP:9923"/>
        <dbReference type="ChEBI" id="CHEBI:30616"/>
        <dbReference type="ChEBI" id="CHEBI:33019"/>
        <dbReference type="ChEBI" id="CHEBI:57972"/>
        <dbReference type="ChEBI" id="CHEBI:78442"/>
        <dbReference type="ChEBI" id="CHEBI:78497"/>
        <dbReference type="ChEBI" id="CHEBI:456215"/>
        <dbReference type="EC" id="6.1.1.7"/>
    </reaction>
</comment>
<comment type="cofactor">
    <cofactor evidence="1">
        <name>Zn(2+)</name>
        <dbReference type="ChEBI" id="CHEBI:29105"/>
    </cofactor>
    <text evidence="1">Binds 1 zinc ion per subunit.</text>
</comment>
<comment type="subcellular location">
    <subcellularLocation>
        <location evidence="1">Cytoplasm</location>
    </subcellularLocation>
</comment>
<comment type="domain">
    <text evidence="1">Consists of three domains; the N-terminal catalytic domain, the editing domain and the C-terminal C-Ala domain. The editing domain removes incorrectly charged amino acids, while the C-Ala domain, along with tRNA(Ala), serves as a bridge to cooperatively bring together the editing and aminoacylation centers thus stimulating deacylation of misacylated tRNAs.</text>
</comment>
<comment type="similarity">
    <text evidence="1">Belongs to the class-II aminoacyl-tRNA synthetase family.</text>
</comment>
<name>SYA_LACDB</name>
<feature type="chain" id="PRO_0000347646" description="Alanine--tRNA ligase">
    <location>
        <begin position="1"/>
        <end position="877"/>
    </location>
</feature>
<feature type="binding site" evidence="1">
    <location>
        <position position="567"/>
    </location>
    <ligand>
        <name>Zn(2+)</name>
        <dbReference type="ChEBI" id="CHEBI:29105"/>
    </ligand>
</feature>
<feature type="binding site" evidence="1">
    <location>
        <position position="571"/>
    </location>
    <ligand>
        <name>Zn(2+)</name>
        <dbReference type="ChEBI" id="CHEBI:29105"/>
    </ligand>
</feature>
<feature type="binding site" evidence="1">
    <location>
        <position position="669"/>
    </location>
    <ligand>
        <name>Zn(2+)</name>
        <dbReference type="ChEBI" id="CHEBI:29105"/>
    </ligand>
</feature>
<feature type="binding site" evidence="1">
    <location>
        <position position="673"/>
    </location>
    <ligand>
        <name>Zn(2+)</name>
        <dbReference type="ChEBI" id="CHEBI:29105"/>
    </ligand>
</feature>
<keyword id="KW-0030">Aminoacyl-tRNA synthetase</keyword>
<keyword id="KW-0067">ATP-binding</keyword>
<keyword id="KW-0963">Cytoplasm</keyword>
<keyword id="KW-0436">Ligase</keyword>
<keyword id="KW-0479">Metal-binding</keyword>
<keyword id="KW-0547">Nucleotide-binding</keyword>
<keyword id="KW-0648">Protein biosynthesis</keyword>
<keyword id="KW-0694">RNA-binding</keyword>
<keyword id="KW-0820">tRNA-binding</keyword>
<keyword id="KW-0862">Zinc</keyword>
<sequence length="877" mass="97400">MKKLNSSEFRQMFLDFFAEHGHMVMQSASLIPKDDPTLLWINSGVATMKKYFDGSVVPKNRRITSSQKSIRTNDIENVGKTARHQTLFEMLGNFSVGDYFKEEAIPWAWEFLTSPDWLDLDKDKLYVTVYPKDTEAHRIWHEVVGLPESHIVQLEDNFWDIGEGPCGPDSEIFYDRGQENNDVPEDDPENYPGGENARYLEIWNIVFSEFNHLPDGSYVEQPHKNIDTGMGLERVLSILQDAPTNFETDLFLPIIHATEEMSAGKKYGANKADDISFKIIADHIRAISFAIGDGALPGNTGRGYVLRRLLRRAALNGRKLGIDGAFLYKLVPVVGDIMKSHYPEVSDQAEFISKVVKNEEDRFGATLEAGLTLLDDLIDKAENSEDKTISGKDAFKMFDTYGFPYELTVEAAEDKGLKVDKDGFDAEMEAQKERARKARGNLQSMGSQDETLMKIKDKSVFEYGVYEEESQLVDIIVDDKLVDKADGEKATLIFDKTPFYAERGGQVADHGDIYDQEGNLVARVVDVQHAPNDQNLHFVDVVLPLVKGQTYKLKIDRARREGLRHSHSATHLLHAALRQVLGEHTHQAGSVVEPDYLRFDFTSLDPITPRELKNVEKIVNEKIWEAIQVKTTETDPETGKKMGALALFDGKYTDKVRVVQMDDFSIEFCGGTHCDNTSQIGVFKIISEQAIGAGVRRIEAVTSKLAYEYLAGRSDILDQIQAQVKATKVDGIQSKIASLQEELRSAEKQNAAYEAQINASKAGKIFDQVKTVGDLTVIATIADVKGMNDLREIADQWKSEGKSDVLILGAKSEDKANMLISLGQKALDKGLKAGDLIKSVAAIFGGGGGGRPNMAQAGGKNPEGLQDAIDAAVSQLD</sequence>
<dbReference type="EC" id="6.1.1.7" evidence="1"/>
<dbReference type="EMBL" id="CP000412">
    <property type="protein sequence ID" value="ABJ58979.1"/>
    <property type="molecule type" value="Genomic_DNA"/>
</dbReference>
<dbReference type="RefSeq" id="WP_011678479.1">
    <property type="nucleotide sequence ID" value="NC_008529.1"/>
</dbReference>
<dbReference type="SMR" id="Q048Z3"/>
<dbReference type="KEGG" id="lbu:LBUL_1486"/>
<dbReference type="HOGENOM" id="CLU_004485_1_1_9"/>
<dbReference type="BioCyc" id="LDEL321956:LBUL_RS07020-MONOMER"/>
<dbReference type="GO" id="GO:0005829">
    <property type="term" value="C:cytosol"/>
    <property type="evidence" value="ECO:0007669"/>
    <property type="project" value="TreeGrafter"/>
</dbReference>
<dbReference type="GO" id="GO:0004813">
    <property type="term" value="F:alanine-tRNA ligase activity"/>
    <property type="evidence" value="ECO:0007669"/>
    <property type="project" value="UniProtKB-UniRule"/>
</dbReference>
<dbReference type="GO" id="GO:0002161">
    <property type="term" value="F:aminoacyl-tRNA deacylase activity"/>
    <property type="evidence" value="ECO:0007669"/>
    <property type="project" value="TreeGrafter"/>
</dbReference>
<dbReference type="GO" id="GO:0005524">
    <property type="term" value="F:ATP binding"/>
    <property type="evidence" value="ECO:0007669"/>
    <property type="project" value="UniProtKB-UniRule"/>
</dbReference>
<dbReference type="GO" id="GO:0140096">
    <property type="term" value="F:catalytic activity, acting on a protein"/>
    <property type="evidence" value="ECO:0007669"/>
    <property type="project" value="UniProtKB-ARBA"/>
</dbReference>
<dbReference type="GO" id="GO:0016740">
    <property type="term" value="F:transferase activity"/>
    <property type="evidence" value="ECO:0007669"/>
    <property type="project" value="UniProtKB-ARBA"/>
</dbReference>
<dbReference type="GO" id="GO:0000049">
    <property type="term" value="F:tRNA binding"/>
    <property type="evidence" value="ECO:0007669"/>
    <property type="project" value="UniProtKB-KW"/>
</dbReference>
<dbReference type="GO" id="GO:0008270">
    <property type="term" value="F:zinc ion binding"/>
    <property type="evidence" value="ECO:0007669"/>
    <property type="project" value="UniProtKB-UniRule"/>
</dbReference>
<dbReference type="GO" id="GO:0006419">
    <property type="term" value="P:alanyl-tRNA aminoacylation"/>
    <property type="evidence" value="ECO:0007669"/>
    <property type="project" value="UniProtKB-UniRule"/>
</dbReference>
<dbReference type="CDD" id="cd00673">
    <property type="entry name" value="AlaRS_core"/>
    <property type="match status" value="1"/>
</dbReference>
<dbReference type="FunFam" id="3.10.310.40:FF:000001">
    <property type="entry name" value="Alanine--tRNA ligase"/>
    <property type="match status" value="1"/>
</dbReference>
<dbReference type="FunFam" id="3.30.54.20:FF:000001">
    <property type="entry name" value="Alanine--tRNA ligase"/>
    <property type="match status" value="1"/>
</dbReference>
<dbReference type="FunFam" id="3.30.930.10:FF:000046">
    <property type="entry name" value="Alanine--tRNA ligase"/>
    <property type="match status" value="1"/>
</dbReference>
<dbReference type="FunFam" id="3.30.980.10:FF:000004">
    <property type="entry name" value="Alanine--tRNA ligase, cytoplasmic"/>
    <property type="match status" value="1"/>
</dbReference>
<dbReference type="Gene3D" id="2.40.30.130">
    <property type="match status" value="1"/>
</dbReference>
<dbReference type="Gene3D" id="3.10.310.40">
    <property type="match status" value="1"/>
</dbReference>
<dbReference type="Gene3D" id="3.30.54.20">
    <property type="match status" value="1"/>
</dbReference>
<dbReference type="Gene3D" id="3.30.930.10">
    <property type="entry name" value="Bira Bifunctional Protein, Domain 2"/>
    <property type="match status" value="1"/>
</dbReference>
<dbReference type="Gene3D" id="3.30.980.10">
    <property type="entry name" value="Threonyl-trna Synthetase, Chain A, domain 2"/>
    <property type="match status" value="1"/>
</dbReference>
<dbReference type="HAMAP" id="MF_00036_B">
    <property type="entry name" value="Ala_tRNA_synth_B"/>
    <property type="match status" value="1"/>
</dbReference>
<dbReference type="InterPro" id="IPR045864">
    <property type="entry name" value="aa-tRNA-synth_II/BPL/LPL"/>
</dbReference>
<dbReference type="InterPro" id="IPR002318">
    <property type="entry name" value="Ala-tRNA-lgiase_IIc"/>
</dbReference>
<dbReference type="InterPro" id="IPR018162">
    <property type="entry name" value="Ala-tRNA-ligase_IIc_anticod-bd"/>
</dbReference>
<dbReference type="InterPro" id="IPR018165">
    <property type="entry name" value="Ala-tRNA-synth_IIc_core"/>
</dbReference>
<dbReference type="InterPro" id="IPR018164">
    <property type="entry name" value="Ala-tRNA-synth_IIc_N"/>
</dbReference>
<dbReference type="InterPro" id="IPR050058">
    <property type="entry name" value="Ala-tRNA_ligase"/>
</dbReference>
<dbReference type="InterPro" id="IPR023033">
    <property type="entry name" value="Ala_tRNA_ligase_euk/bac"/>
</dbReference>
<dbReference type="InterPro" id="IPR003156">
    <property type="entry name" value="DHHA1_dom"/>
</dbReference>
<dbReference type="InterPro" id="IPR018163">
    <property type="entry name" value="Thr/Ala-tRNA-synth_IIc_edit"/>
</dbReference>
<dbReference type="InterPro" id="IPR009000">
    <property type="entry name" value="Transl_B-barrel_sf"/>
</dbReference>
<dbReference type="InterPro" id="IPR012947">
    <property type="entry name" value="tRNA_SAD"/>
</dbReference>
<dbReference type="NCBIfam" id="TIGR00344">
    <property type="entry name" value="alaS"/>
    <property type="match status" value="1"/>
</dbReference>
<dbReference type="PANTHER" id="PTHR11777:SF9">
    <property type="entry name" value="ALANINE--TRNA LIGASE, CYTOPLASMIC"/>
    <property type="match status" value="1"/>
</dbReference>
<dbReference type="PANTHER" id="PTHR11777">
    <property type="entry name" value="ALANYL-TRNA SYNTHETASE"/>
    <property type="match status" value="1"/>
</dbReference>
<dbReference type="Pfam" id="PF02272">
    <property type="entry name" value="DHHA1"/>
    <property type="match status" value="1"/>
</dbReference>
<dbReference type="Pfam" id="PF01411">
    <property type="entry name" value="tRNA-synt_2c"/>
    <property type="match status" value="1"/>
</dbReference>
<dbReference type="Pfam" id="PF07973">
    <property type="entry name" value="tRNA_SAD"/>
    <property type="match status" value="1"/>
</dbReference>
<dbReference type="PRINTS" id="PR00980">
    <property type="entry name" value="TRNASYNTHALA"/>
</dbReference>
<dbReference type="SMART" id="SM00863">
    <property type="entry name" value="tRNA_SAD"/>
    <property type="match status" value="1"/>
</dbReference>
<dbReference type="SUPFAM" id="SSF55681">
    <property type="entry name" value="Class II aaRS and biotin synthetases"/>
    <property type="match status" value="1"/>
</dbReference>
<dbReference type="SUPFAM" id="SSF101353">
    <property type="entry name" value="Putative anticodon-binding domain of alanyl-tRNA synthetase (AlaRS)"/>
    <property type="match status" value="1"/>
</dbReference>
<dbReference type="SUPFAM" id="SSF55186">
    <property type="entry name" value="ThrRS/AlaRS common domain"/>
    <property type="match status" value="1"/>
</dbReference>
<dbReference type="SUPFAM" id="SSF50447">
    <property type="entry name" value="Translation proteins"/>
    <property type="match status" value="1"/>
</dbReference>
<dbReference type="PROSITE" id="PS50860">
    <property type="entry name" value="AA_TRNA_LIGASE_II_ALA"/>
    <property type="match status" value="1"/>
</dbReference>
<accession>Q048Z3</accession>
<reference key="1">
    <citation type="journal article" date="2006" name="Proc. Natl. Acad. Sci. U.S.A.">
        <title>Comparative genomics of the lactic acid bacteria.</title>
        <authorList>
            <person name="Makarova K.S."/>
            <person name="Slesarev A."/>
            <person name="Wolf Y.I."/>
            <person name="Sorokin A."/>
            <person name="Mirkin B."/>
            <person name="Koonin E.V."/>
            <person name="Pavlov A."/>
            <person name="Pavlova N."/>
            <person name="Karamychev V."/>
            <person name="Polouchine N."/>
            <person name="Shakhova V."/>
            <person name="Grigoriev I."/>
            <person name="Lou Y."/>
            <person name="Rohksar D."/>
            <person name="Lucas S."/>
            <person name="Huang K."/>
            <person name="Goodstein D.M."/>
            <person name="Hawkins T."/>
            <person name="Plengvidhya V."/>
            <person name="Welker D."/>
            <person name="Hughes J."/>
            <person name="Goh Y."/>
            <person name="Benson A."/>
            <person name="Baldwin K."/>
            <person name="Lee J.-H."/>
            <person name="Diaz-Muniz I."/>
            <person name="Dosti B."/>
            <person name="Smeianov V."/>
            <person name="Wechter W."/>
            <person name="Barabote R."/>
            <person name="Lorca G."/>
            <person name="Altermann E."/>
            <person name="Barrangou R."/>
            <person name="Ganesan B."/>
            <person name="Xie Y."/>
            <person name="Rawsthorne H."/>
            <person name="Tamir D."/>
            <person name="Parker C."/>
            <person name="Breidt F."/>
            <person name="Broadbent J.R."/>
            <person name="Hutkins R."/>
            <person name="O'Sullivan D."/>
            <person name="Steele J."/>
            <person name="Unlu G."/>
            <person name="Saier M.H. Jr."/>
            <person name="Klaenhammer T."/>
            <person name="Richardson P."/>
            <person name="Kozyavkin S."/>
            <person name="Weimer B.C."/>
            <person name="Mills D.A."/>
        </authorList>
    </citation>
    <scope>NUCLEOTIDE SEQUENCE [LARGE SCALE GENOMIC DNA]</scope>
    <source>
        <strain>ATCC BAA-365 / Lb-18</strain>
    </source>
</reference>
<gene>
    <name evidence="1" type="primary">alaS</name>
    <name type="ordered locus">LBUL_1486</name>
</gene>
<organism>
    <name type="scientific">Lactobacillus delbrueckii subsp. bulgaricus (strain ATCC BAA-365 / Lb-18)</name>
    <dbReference type="NCBI Taxonomy" id="321956"/>
    <lineage>
        <taxon>Bacteria</taxon>
        <taxon>Bacillati</taxon>
        <taxon>Bacillota</taxon>
        <taxon>Bacilli</taxon>
        <taxon>Lactobacillales</taxon>
        <taxon>Lactobacillaceae</taxon>
        <taxon>Lactobacillus</taxon>
    </lineage>
</organism>
<evidence type="ECO:0000255" key="1">
    <source>
        <dbReference type="HAMAP-Rule" id="MF_00036"/>
    </source>
</evidence>
<protein>
    <recommendedName>
        <fullName evidence="1">Alanine--tRNA ligase</fullName>
        <ecNumber evidence="1">6.1.1.7</ecNumber>
    </recommendedName>
    <alternativeName>
        <fullName evidence="1">Alanyl-tRNA synthetase</fullName>
        <shortName evidence="1">AlaRS</shortName>
    </alternativeName>
</protein>